<reference key="1">
    <citation type="journal article" date="2000" name="Nature">
        <title>Complete genome sequence of Pseudomonas aeruginosa PAO1, an opportunistic pathogen.</title>
        <authorList>
            <person name="Stover C.K."/>
            <person name="Pham X.-Q.T."/>
            <person name="Erwin A.L."/>
            <person name="Mizoguchi S.D."/>
            <person name="Warrener P."/>
            <person name="Hickey M.J."/>
            <person name="Brinkman F.S.L."/>
            <person name="Hufnagle W.O."/>
            <person name="Kowalik D.J."/>
            <person name="Lagrou M."/>
            <person name="Garber R.L."/>
            <person name="Goltry L."/>
            <person name="Tolentino E."/>
            <person name="Westbrock-Wadman S."/>
            <person name="Yuan Y."/>
            <person name="Brody L.L."/>
            <person name="Coulter S.N."/>
            <person name="Folger K.R."/>
            <person name="Kas A."/>
            <person name="Larbig K."/>
            <person name="Lim R.M."/>
            <person name="Smith K.A."/>
            <person name="Spencer D.H."/>
            <person name="Wong G.K.-S."/>
            <person name="Wu Z."/>
            <person name="Paulsen I.T."/>
            <person name="Reizer J."/>
            <person name="Saier M.H. Jr."/>
            <person name="Hancock R.E.W."/>
            <person name="Lory S."/>
            <person name="Olson M.V."/>
        </authorList>
    </citation>
    <scope>NUCLEOTIDE SEQUENCE [LARGE SCALE GENOMIC DNA]</scope>
    <source>
        <strain>ATCC 15692 / DSM 22644 / CIP 104116 / JCM 14847 / LMG 12228 / 1C / PRS 101 / PAO1</strain>
    </source>
</reference>
<gene>
    <name evidence="1" type="primary">hisS</name>
    <name type="ordered locus">PA3802</name>
</gene>
<comment type="catalytic activity">
    <reaction evidence="1">
        <text>tRNA(His) + L-histidine + ATP = L-histidyl-tRNA(His) + AMP + diphosphate + H(+)</text>
        <dbReference type="Rhea" id="RHEA:17313"/>
        <dbReference type="Rhea" id="RHEA-COMP:9665"/>
        <dbReference type="Rhea" id="RHEA-COMP:9689"/>
        <dbReference type="ChEBI" id="CHEBI:15378"/>
        <dbReference type="ChEBI" id="CHEBI:30616"/>
        <dbReference type="ChEBI" id="CHEBI:33019"/>
        <dbReference type="ChEBI" id="CHEBI:57595"/>
        <dbReference type="ChEBI" id="CHEBI:78442"/>
        <dbReference type="ChEBI" id="CHEBI:78527"/>
        <dbReference type="ChEBI" id="CHEBI:456215"/>
        <dbReference type="EC" id="6.1.1.21"/>
    </reaction>
</comment>
<comment type="subunit">
    <text evidence="1">Homodimer.</text>
</comment>
<comment type="subcellular location">
    <subcellularLocation>
        <location evidence="1">Cytoplasm</location>
    </subcellularLocation>
</comment>
<comment type="similarity">
    <text evidence="1">Belongs to the class-II aminoacyl-tRNA synthetase family.</text>
</comment>
<organism>
    <name type="scientific">Pseudomonas aeruginosa (strain ATCC 15692 / DSM 22644 / CIP 104116 / JCM 14847 / LMG 12228 / 1C / PRS 101 / PAO1)</name>
    <dbReference type="NCBI Taxonomy" id="208964"/>
    <lineage>
        <taxon>Bacteria</taxon>
        <taxon>Pseudomonadati</taxon>
        <taxon>Pseudomonadota</taxon>
        <taxon>Gammaproteobacteria</taxon>
        <taxon>Pseudomonadales</taxon>
        <taxon>Pseudomonadaceae</taxon>
        <taxon>Pseudomonas</taxon>
    </lineage>
</organism>
<proteinExistence type="inferred from homology"/>
<keyword id="KW-0030">Aminoacyl-tRNA synthetase</keyword>
<keyword id="KW-0067">ATP-binding</keyword>
<keyword id="KW-0963">Cytoplasm</keyword>
<keyword id="KW-0436">Ligase</keyword>
<keyword id="KW-0547">Nucleotide-binding</keyword>
<keyword id="KW-0648">Protein biosynthesis</keyword>
<keyword id="KW-1185">Reference proteome</keyword>
<protein>
    <recommendedName>
        <fullName evidence="1">Histidine--tRNA ligase</fullName>
        <ecNumber evidence="1">6.1.1.21</ecNumber>
    </recommendedName>
    <alternativeName>
        <fullName evidence="1">Histidyl-tRNA synthetase</fullName>
        <shortName evidence="1">HisRS</shortName>
    </alternativeName>
</protein>
<accession>Q9HXJ5</accession>
<name>SYH_PSEAE</name>
<feature type="chain" id="PRO_0000136225" description="Histidine--tRNA ligase">
    <location>
        <begin position="1"/>
        <end position="429"/>
    </location>
</feature>
<dbReference type="EC" id="6.1.1.21" evidence="1"/>
<dbReference type="EMBL" id="AE004091">
    <property type="protein sequence ID" value="AAG07189.1"/>
    <property type="molecule type" value="Genomic_DNA"/>
</dbReference>
<dbReference type="PIR" id="E83171">
    <property type="entry name" value="E83171"/>
</dbReference>
<dbReference type="RefSeq" id="NP_252491.1">
    <property type="nucleotide sequence ID" value="NC_002516.2"/>
</dbReference>
<dbReference type="RefSeq" id="WP_003092797.1">
    <property type="nucleotide sequence ID" value="NZ_QZGE01000001.1"/>
</dbReference>
<dbReference type="SMR" id="Q9HXJ5"/>
<dbReference type="FunCoup" id="Q9HXJ5">
    <property type="interactions" value="653"/>
</dbReference>
<dbReference type="STRING" id="208964.PA3802"/>
<dbReference type="PaxDb" id="208964-PA3802"/>
<dbReference type="GeneID" id="878330"/>
<dbReference type="KEGG" id="pae:PA3802"/>
<dbReference type="PATRIC" id="fig|208964.12.peg.3981"/>
<dbReference type="PseudoCAP" id="PA3802"/>
<dbReference type="HOGENOM" id="CLU_025113_1_1_6"/>
<dbReference type="InParanoid" id="Q9HXJ5"/>
<dbReference type="OrthoDB" id="9800814at2"/>
<dbReference type="PhylomeDB" id="Q9HXJ5"/>
<dbReference type="BioCyc" id="PAER208964:G1FZ6-3873-MONOMER"/>
<dbReference type="Proteomes" id="UP000002438">
    <property type="component" value="Chromosome"/>
</dbReference>
<dbReference type="GO" id="GO:0005737">
    <property type="term" value="C:cytoplasm"/>
    <property type="evidence" value="ECO:0007669"/>
    <property type="project" value="UniProtKB-SubCell"/>
</dbReference>
<dbReference type="GO" id="GO:0005524">
    <property type="term" value="F:ATP binding"/>
    <property type="evidence" value="ECO:0007669"/>
    <property type="project" value="UniProtKB-UniRule"/>
</dbReference>
<dbReference type="GO" id="GO:0004821">
    <property type="term" value="F:histidine-tRNA ligase activity"/>
    <property type="evidence" value="ECO:0000318"/>
    <property type="project" value="GO_Central"/>
</dbReference>
<dbReference type="GO" id="GO:0006427">
    <property type="term" value="P:histidyl-tRNA aminoacylation"/>
    <property type="evidence" value="ECO:0000318"/>
    <property type="project" value="GO_Central"/>
</dbReference>
<dbReference type="CDD" id="cd00773">
    <property type="entry name" value="HisRS-like_core"/>
    <property type="match status" value="1"/>
</dbReference>
<dbReference type="CDD" id="cd00859">
    <property type="entry name" value="HisRS_anticodon"/>
    <property type="match status" value="1"/>
</dbReference>
<dbReference type="FunFam" id="3.30.930.10:FF:000005">
    <property type="entry name" value="Histidine--tRNA ligase"/>
    <property type="match status" value="1"/>
</dbReference>
<dbReference type="Gene3D" id="3.40.50.800">
    <property type="entry name" value="Anticodon-binding domain"/>
    <property type="match status" value="1"/>
</dbReference>
<dbReference type="Gene3D" id="3.30.930.10">
    <property type="entry name" value="Bira Bifunctional Protein, Domain 2"/>
    <property type="match status" value="1"/>
</dbReference>
<dbReference type="HAMAP" id="MF_00127">
    <property type="entry name" value="His_tRNA_synth"/>
    <property type="match status" value="1"/>
</dbReference>
<dbReference type="InterPro" id="IPR006195">
    <property type="entry name" value="aa-tRNA-synth_II"/>
</dbReference>
<dbReference type="InterPro" id="IPR045864">
    <property type="entry name" value="aa-tRNA-synth_II/BPL/LPL"/>
</dbReference>
<dbReference type="InterPro" id="IPR004154">
    <property type="entry name" value="Anticodon-bd"/>
</dbReference>
<dbReference type="InterPro" id="IPR036621">
    <property type="entry name" value="Anticodon-bd_dom_sf"/>
</dbReference>
<dbReference type="InterPro" id="IPR015807">
    <property type="entry name" value="His-tRNA-ligase"/>
</dbReference>
<dbReference type="InterPro" id="IPR041715">
    <property type="entry name" value="HisRS-like_core"/>
</dbReference>
<dbReference type="InterPro" id="IPR004516">
    <property type="entry name" value="HisRS/HisZ"/>
</dbReference>
<dbReference type="InterPro" id="IPR033656">
    <property type="entry name" value="HisRS_anticodon"/>
</dbReference>
<dbReference type="NCBIfam" id="TIGR00442">
    <property type="entry name" value="hisS"/>
    <property type="match status" value="1"/>
</dbReference>
<dbReference type="PANTHER" id="PTHR43707:SF1">
    <property type="entry name" value="HISTIDINE--TRNA LIGASE, MITOCHONDRIAL-RELATED"/>
    <property type="match status" value="1"/>
</dbReference>
<dbReference type="PANTHER" id="PTHR43707">
    <property type="entry name" value="HISTIDYL-TRNA SYNTHETASE"/>
    <property type="match status" value="1"/>
</dbReference>
<dbReference type="Pfam" id="PF03129">
    <property type="entry name" value="HGTP_anticodon"/>
    <property type="match status" value="1"/>
</dbReference>
<dbReference type="Pfam" id="PF13393">
    <property type="entry name" value="tRNA-synt_His"/>
    <property type="match status" value="1"/>
</dbReference>
<dbReference type="PIRSF" id="PIRSF001549">
    <property type="entry name" value="His-tRNA_synth"/>
    <property type="match status" value="1"/>
</dbReference>
<dbReference type="SUPFAM" id="SSF52954">
    <property type="entry name" value="Class II aaRS ABD-related"/>
    <property type="match status" value="1"/>
</dbReference>
<dbReference type="SUPFAM" id="SSF55681">
    <property type="entry name" value="Class II aaRS and biotin synthetases"/>
    <property type="match status" value="1"/>
</dbReference>
<dbReference type="PROSITE" id="PS50862">
    <property type="entry name" value="AA_TRNA_LIGASE_II"/>
    <property type="match status" value="1"/>
</dbReference>
<evidence type="ECO:0000255" key="1">
    <source>
        <dbReference type="HAMAP-Rule" id="MF_00127"/>
    </source>
</evidence>
<sequence>MSKSLQAIRGMNDILPEQTPAWRYLERTFAGLLDGYGYSEIRLPILEFTELFARGIGEGTDVVDKEMYTFLDRNGESLTMRPEGTAGCVRAVLEHGLSGGGQVQKLWYTGPMFRYEKPQKGRYRQFHQIGVEVFNLPGPDIDAELIILTWRLWQKLGMADAVTLQLNTLGSSEARARYREALVAYLQERFEQLDEDSQRRMTTNPLRILDSKVESTQALLVGAPTLHDYLDEESIAHFEGLKARLDAVGLRYEINQKLVRGLDYYCRTAFEWVTDKLGAQGTVCGGGRYDGLVSQFGGKPTPGVGFAMGVERLVLLLETLGVIPAELNRPADLYVCAFGEPAELAALTLAEQLRSAIPGIRLLVNAGAGSFKSQFKKADKSGARFALILGEDEVANRVVGFKPLRDEGEQQSIAWDALPEHLAACLAQA</sequence>